<protein>
    <recommendedName>
        <fullName evidence="1">Large ribosomal subunit protein uL11</fullName>
    </recommendedName>
    <alternativeName>
        <fullName evidence="2">50S ribosomal protein L11</fullName>
    </alternativeName>
</protein>
<organism>
    <name type="scientific">Streptococcus agalactiae serotype Ia (strain ATCC 27591 / A909 / CDC SS700)</name>
    <dbReference type="NCBI Taxonomy" id="205921"/>
    <lineage>
        <taxon>Bacteria</taxon>
        <taxon>Bacillati</taxon>
        <taxon>Bacillota</taxon>
        <taxon>Bacilli</taxon>
        <taxon>Lactobacillales</taxon>
        <taxon>Streptococcaceae</taxon>
        <taxon>Streptococcus</taxon>
    </lineage>
</organism>
<accession>Q3K003</accession>
<gene>
    <name evidence="1" type="primary">rplK</name>
    <name type="ordered locus">SAK_1544</name>
</gene>
<sequence length="141" mass="14886">MAKKVEKLVKLQIPAGKATPAPPVGPALGQAGINIMGFTKEFNARTADQAGMIIPVVISVYEDKSFDFITKTPPAAVLLKKAAGVEKGSGEPNKTKVATITRAQVQEIAETKMPDLNAANLESAMRMIEGTARSMGFTVTD</sequence>
<evidence type="ECO:0000255" key="1">
    <source>
        <dbReference type="HAMAP-Rule" id="MF_00736"/>
    </source>
</evidence>
<evidence type="ECO:0000305" key="2"/>
<dbReference type="EMBL" id="CP000114">
    <property type="protein sequence ID" value="ABA45730.1"/>
    <property type="molecule type" value="Genomic_DNA"/>
</dbReference>
<dbReference type="RefSeq" id="WP_001085802.1">
    <property type="nucleotide sequence ID" value="NC_007432.1"/>
</dbReference>
<dbReference type="SMR" id="Q3K003"/>
<dbReference type="GeneID" id="66886375"/>
<dbReference type="KEGG" id="sak:SAK_1544"/>
<dbReference type="HOGENOM" id="CLU_074237_2_1_9"/>
<dbReference type="GO" id="GO:0022625">
    <property type="term" value="C:cytosolic large ribosomal subunit"/>
    <property type="evidence" value="ECO:0007669"/>
    <property type="project" value="TreeGrafter"/>
</dbReference>
<dbReference type="GO" id="GO:0070180">
    <property type="term" value="F:large ribosomal subunit rRNA binding"/>
    <property type="evidence" value="ECO:0007669"/>
    <property type="project" value="UniProtKB-UniRule"/>
</dbReference>
<dbReference type="GO" id="GO:0003735">
    <property type="term" value="F:structural constituent of ribosome"/>
    <property type="evidence" value="ECO:0007669"/>
    <property type="project" value="InterPro"/>
</dbReference>
<dbReference type="GO" id="GO:0006412">
    <property type="term" value="P:translation"/>
    <property type="evidence" value="ECO:0007669"/>
    <property type="project" value="UniProtKB-UniRule"/>
</dbReference>
<dbReference type="CDD" id="cd00349">
    <property type="entry name" value="Ribosomal_L11"/>
    <property type="match status" value="1"/>
</dbReference>
<dbReference type="FunFam" id="1.10.10.250:FF:000001">
    <property type="entry name" value="50S ribosomal protein L11"/>
    <property type="match status" value="1"/>
</dbReference>
<dbReference type="FunFam" id="3.30.1550.10:FF:000001">
    <property type="entry name" value="50S ribosomal protein L11"/>
    <property type="match status" value="1"/>
</dbReference>
<dbReference type="Gene3D" id="1.10.10.250">
    <property type="entry name" value="Ribosomal protein L11, C-terminal domain"/>
    <property type="match status" value="1"/>
</dbReference>
<dbReference type="Gene3D" id="3.30.1550.10">
    <property type="entry name" value="Ribosomal protein L11/L12, N-terminal domain"/>
    <property type="match status" value="1"/>
</dbReference>
<dbReference type="HAMAP" id="MF_00736">
    <property type="entry name" value="Ribosomal_uL11"/>
    <property type="match status" value="1"/>
</dbReference>
<dbReference type="InterPro" id="IPR000911">
    <property type="entry name" value="Ribosomal_uL11"/>
</dbReference>
<dbReference type="InterPro" id="IPR006519">
    <property type="entry name" value="Ribosomal_uL11_bac-typ"/>
</dbReference>
<dbReference type="InterPro" id="IPR020783">
    <property type="entry name" value="Ribosomal_uL11_C"/>
</dbReference>
<dbReference type="InterPro" id="IPR036769">
    <property type="entry name" value="Ribosomal_uL11_C_sf"/>
</dbReference>
<dbReference type="InterPro" id="IPR020785">
    <property type="entry name" value="Ribosomal_uL11_CS"/>
</dbReference>
<dbReference type="InterPro" id="IPR020784">
    <property type="entry name" value="Ribosomal_uL11_N"/>
</dbReference>
<dbReference type="InterPro" id="IPR036796">
    <property type="entry name" value="Ribosomal_uL11_N_sf"/>
</dbReference>
<dbReference type="NCBIfam" id="TIGR01632">
    <property type="entry name" value="L11_bact"/>
    <property type="match status" value="1"/>
</dbReference>
<dbReference type="PANTHER" id="PTHR11661">
    <property type="entry name" value="60S RIBOSOMAL PROTEIN L12"/>
    <property type="match status" value="1"/>
</dbReference>
<dbReference type="PANTHER" id="PTHR11661:SF1">
    <property type="entry name" value="LARGE RIBOSOMAL SUBUNIT PROTEIN UL11M"/>
    <property type="match status" value="1"/>
</dbReference>
<dbReference type="Pfam" id="PF00298">
    <property type="entry name" value="Ribosomal_L11"/>
    <property type="match status" value="1"/>
</dbReference>
<dbReference type="Pfam" id="PF03946">
    <property type="entry name" value="Ribosomal_L11_N"/>
    <property type="match status" value="1"/>
</dbReference>
<dbReference type="SMART" id="SM00649">
    <property type="entry name" value="RL11"/>
    <property type="match status" value="1"/>
</dbReference>
<dbReference type="SUPFAM" id="SSF54747">
    <property type="entry name" value="Ribosomal L11/L12e N-terminal domain"/>
    <property type="match status" value="1"/>
</dbReference>
<dbReference type="SUPFAM" id="SSF46906">
    <property type="entry name" value="Ribosomal protein L11, C-terminal domain"/>
    <property type="match status" value="1"/>
</dbReference>
<dbReference type="PROSITE" id="PS00359">
    <property type="entry name" value="RIBOSOMAL_L11"/>
    <property type="match status" value="1"/>
</dbReference>
<name>RL11_STRA1</name>
<reference key="1">
    <citation type="journal article" date="2005" name="Proc. Natl. Acad. Sci. U.S.A.">
        <title>Genome analysis of multiple pathogenic isolates of Streptococcus agalactiae: implications for the microbial 'pan-genome'.</title>
        <authorList>
            <person name="Tettelin H."/>
            <person name="Masignani V."/>
            <person name="Cieslewicz M.J."/>
            <person name="Donati C."/>
            <person name="Medini D."/>
            <person name="Ward N.L."/>
            <person name="Angiuoli S.V."/>
            <person name="Crabtree J."/>
            <person name="Jones A.L."/>
            <person name="Durkin A.S."/>
            <person name="DeBoy R.T."/>
            <person name="Davidsen T.M."/>
            <person name="Mora M."/>
            <person name="Scarselli M."/>
            <person name="Margarit y Ros I."/>
            <person name="Peterson J.D."/>
            <person name="Hauser C.R."/>
            <person name="Sundaram J.P."/>
            <person name="Nelson W.C."/>
            <person name="Madupu R."/>
            <person name="Brinkac L.M."/>
            <person name="Dodson R.J."/>
            <person name="Rosovitz M.J."/>
            <person name="Sullivan S.A."/>
            <person name="Daugherty S.C."/>
            <person name="Haft D.H."/>
            <person name="Selengut J."/>
            <person name="Gwinn M.L."/>
            <person name="Zhou L."/>
            <person name="Zafar N."/>
            <person name="Khouri H."/>
            <person name="Radune D."/>
            <person name="Dimitrov G."/>
            <person name="Watkins K."/>
            <person name="O'Connor K.J."/>
            <person name="Smith S."/>
            <person name="Utterback T.R."/>
            <person name="White O."/>
            <person name="Rubens C.E."/>
            <person name="Grandi G."/>
            <person name="Madoff L.C."/>
            <person name="Kasper D.L."/>
            <person name="Telford J.L."/>
            <person name="Wessels M.R."/>
            <person name="Rappuoli R."/>
            <person name="Fraser C.M."/>
        </authorList>
    </citation>
    <scope>NUCLEOTIDE SEQUENCE [LARGE SCALE GENOMIC DNA]</scope>
    <source>
        <strain>ATCC 27591 / A909 / CDC SS700</strain>
    </source>
</reference>
<keyword id="KW-0488">Methylation</keyword>
<keyword id="KW-0687">Ribonucleoprotein</keyword>
<keyword id="KW-0689">Ribosomal protein</keyword>
<keyword id="KW-0694">RNA-binding</keyword>
<keyword id="KW-0699">rRNA-binding</keyword>
<comment type="function">
    <text evidence="1">Forms part of the ribosomal stalk which helps the ribosome interact with GTP-bound translation factors.</text>
</comment>
<comment type="subunit">
    <text evidence="1">Part of the ribosomal stalk of the 50S ribosomal subunit. Interacts with L10 and the large rRNA to form the base of the stalk. L10 forms an elongated spine to which L12 dimers bind in a sequential fashion forming a multimeric L10(L12)X complex.</text>
</comment>
<comment type="PTM">
    <text evidence="1">One or more lysine residues are methylated.</text>
</comment>
<comment type="similarity">
    <text evidence="1">Belongs to the universal ribosomal protein uL11 family.</text>
</comment>
<proteinExistence type="inferred from homology"/>
<feature type="chain" id="PRO_0000258220" description="Large ribosomal subunit protein uL11">
    <location>
        <begin position="1"/>
        <end position="141"/>
    </location>
</feature>